<organism>
    <name type="scientific">Methanoregula boonei (strain DSM 21154 / JCM 14090 / 6A8)</name>
    <dbReference type="NCBI Taxonomy" id="456442"/>
    <lineage>
        <taxon>Archaea</taxon>
        <taxon>Methanobacteriati</taxon>
        <taxon>Methanobacteriota</taxon>
        <taxon>Stenosarchaea group</taxon>
        <taxon>Methanomicrobia</taxon>
        <taxon>Methanomicrobiales</taxon>
        <taxon>Methanoregulaceae</taxon>
        <taxon>Methanoregula</taxon>
    </lineage>
</organism>
<feature type="chain" id="PRO_1000054811" description="Small ribosomal subunit protein uS15">
    <location>
        <begin position="1"/>
        <end position="152"/>
    </location>
</feature>
<feature type="region of interest" description="Disordered" evidence="2">
    <location>
        <begin position="1"/>
        <end position="25"/>
    </location>
</feature>
<feature type="compositionally biased region" description="Basic residues" evidence="2">
    <location>
        <begin position="1"/>
        <end position="11"/>
    </location>
</feature>
<reference key="1">
    <citation type="journal article" date="2015" name="Microbiology">
        <title>Genome of Methanoregula boonei 6A8 reveals adaptations to oligotrophic peatland environments.</title>
        <authorList>
            <person name="Braeuer S."/>
            <person name="Cadillo-Quiroz H."/>
            <person name="Kyrpides N."/>
            <person name="Woyke T."/>
            <person name="Goodwin L."/>
            <person name="Detter C."/>
            <person name="Podell S."/>
            <person name="Yavitt J.B."/>
            <person name="Zinder S.H."/>
        </authorList>
    </citation>
    <scope>NUCLEOTIDE SEQUENCE [LARGE SCALE GENOMIC DNA]</scope>
    <source>
        <strain>DSM 21154 / JCM 14090 / 6A8</strain>
    </source>
</reference>
<sequence>MARMHARRRGKSSSVRPARNEAPAWSNTDKAAIEKLIVDLRKEGTSASMIGLVLRDRYGVPDVKMVTGKSIGDILTENKVSSEIPEDLRDLMVKALGLRKHLGENPKDLHNKRQLHLVEAKIRRLVKYYIGTRKLPAGFTYKPENAEILLSR</sequence>
<proteinExistence type="inferred from homology"/>
<accession>A7IAI8</accession>
<gene>
    <name evidence="1" type="primary">rps15</name>
    <name type="ordered locus">Mboo_2235</name>
</gene>
<keyword id="KW-1185">Reference proteome</keyword>
<keyword id="KW-0687">Ribonucleoprotein</keyword>
<keyword id="KW-0689">Ribosomal protein</keyword>
<comment type="subunit">
    <text evidence="1">Part of the 30S ribosomal subunit.</text>
</comment>
<comment type="similarity">
    <text evidence="1">Belongs to the universal ribosomal protein uS15 family.</text>
</comment>
<dbReference type="EMBL" id="CP000780">
    <property type="protein sequence ID" value="ABS56749.1"/>
    <property type="molecule type" value="Genomic_DNA"/>
</dbReference>
<dbReference type="RefSeq" id="WP_012107809.1">
    <property type="nucleotide sequence ID" value="NC_009712.1"/>
</dbReference>
<dbReference type="SMR" id="A7IAI8"/>
<dbReference type="STRING" id="456442.Mboo_2235"/>
<dbReference type="GeneID" id="5410363"/>
<dbReference type="KEGG" id="mbn:Mboo_2235"/>
<dbReference type="eggNOG" id="arCOG04185">
    <property type="taxonomic scope" value="Archaea"/>
</dbReference>
<dbReference type="HOGENOM" id="CLU_090139_2_0_2"/>
<dbReference type="OrthoDB" id="6533at2157"/>
<dbReference type="Proteomes" id="UP000002408">
    <property type="component" value="Chromosome"/>
</dbReference>
<dbReference type="GO" id="GO:0022627">
    <property type="term" value="C:cytosolic small ribosomal subunit"/>
    <property type="evidence" value="ECO:0007669"/>
    <property type="project" value="TreeGrafter"/>
</dbReference>
<dbReference type="GO" id="GO:0070181">
    <property type="term" value="F:small ribosomal subunit rRNA binding"/>
    <property type="evidence" value="ECO:0007669"/>
    <property type="project" value="TreeGrafter"/>
</dbReference>
<dbReference type="GO" id="GO:0003735">
    <property type="term" value="F:structural constituent of ribosome"/>
    <property type="evidence" value="ECO:0007669"/>
    <property type="project" value="InterPro"/>
</dbReference>
<dbReference type="GO" id="GO:0006412">
    <property type="term" value="P:translation"/>
    <property type="evidence" value="ECO:0007669"/>
    <property type="project" value="UniProtKB-UniRule"/>
</dbReference>
<dbReference type="CDD" id="cd00353">
    <property type="entry name" value="Ribosomal_S15p_S13e"/>
    <property type="match status" value="1"/>
</dbReference>
<dbReference type="Gene3D" id="4.10.860.130">
    <property type="match status" value="1"/>
</dbReference>
<dbReference type="Gene3D" id="1.10.287.10">
    <property type="entry name" value="S15/NS1, RNA-binding"/>
    <property type="match status" value="1"/>
</dbReference>
<dbReference type="HAMAP" id="MF_01343_A">
    <property type="entry name" value="Ribosomal_uS15_A"/>
    <property type="match status" value="1"/>
</dbReference>
<dbReference type="InterPro" id="IPR000589">
    <property type="entry name" value="Ribosomal_uS15"/>
</dbReference>
<dbReference type="InterPro" id="IPR023029">
    <property type="entry name" value="Ribosomal_uS15_arc_euk"/>
</dbReference>
<dbReference type="InterPro" id="IPR012606">
    <property type="entry name" value="Ribosomal_uS15_N"/>
</dbReference>
<dbReference type="InterPro" id="IPR009068">
    <property type="entry name" value="uS15_NS1_RNA-bd_sf"/>
</dbReference>
<dbReference type="NCBIfam" id="NF006331">
    <property type="entry name" value="PRK08561.1"/>
    <property type="match status" value="1"/>
</dbReference>
<dbReference type="PANTHER" id="PTHR11885">
    <property type="entry name" value="RIBOSOMAL PROTEIN S15P/S13E"/>
    <property type="match status" value="1"/>
</dbReference>
<dbReference type="PANTHER" id="PTHR11885:SF6">
    <property type="entry name" value="SMALL RIBOSOMAL SUBUNIT PROTEIN US15"/>
    <property type="match status" value="1"/>
</dbReference>
<dbReference type="Pfam" id="PF08069">
    <property type="entry name" value="Ribosomal_S13_N"/>
    <property type="match status" value="1"/>
</dbReference>
<dbReference type="Pfam" id="PF00312">
    <property type="entry name" value="Ribosomal_S15"/>
    <property type="match status" value="1"/>
</dbReference>
<dbReference type="SMART" id="SM01386">
    <property type="entry name" value="Ribosomal_S13_N"/>
    <property type="match status" value="1"/>
</dbReference>
<dbReference type="SMART" id="SM01387">
    <property type="entry name" value="Ribosomal_S15"/>
    <property type="match status" value="1"/>
</dbReference>
<dbReference type="SUPFAM" id="SSF47060">
    <property type="entry name" value="S15/NS1 RNA-binding domain"/>
    <property type="match status" value="1"/>
</dbReference>
<dbReference type="PROSITE" id="PS00362">
    <property type="entry name" value="RIBOSOMAL_S15"/>
    <property type="match status" value="1"/>
</dbReference>
<evidence type="ECO:0000255" key="1">
    <source>
        <dbReference type="HAMAP-Rule" id="MF_01343"/>
    </source>
</evidence>
<evidence type="ECO:0000256" key="2">
    <source>
        <dbReference type="SAM" id="MobiDB-lite"/>
    </source>
</evidence>
<evidence type="ECO:0000305" key="3"/>
<protein>
    <recommendedName>
        <fullName evidence="1">Small ribosomal subunit protein uS15</fullName>
    </recommendedName>
    <alternativeName>
        <fullName evidence="3">30S ribosomal protein S15</fullName>
    </alternativeName>
</protein>
<name>RS15_METB6</name>